<feature type="chain" id="PRO_0000298110" description="Cell division topological specificity factor">
    <location>
        <begin position="1"/>
        <end position="89"/>
    </location>
</feature>
<reference key="1">
    <citation type="journal article" date="2004" name="Proc. Natl. Acad. Sci. U.S.A.">
        <title>Genome sequence of the enterobacterial phytopathogen Erwinia carotovora subsp. atroseptica and characterization of virulence factors.</title>
        <authorList>
            <person name="Bell K.S."/>
            <person name="Sebaihia M."/>
            <person name="Pritchard L."/>
            <person name="Holden M.T.G."/>
            <person name="Hyman L.J."/>
            <person name="Holeva M.C."/>
            <person name="Thomson N.R."/>
            <person name="Bentley S.D."/>
            <person name="Churcher L.J.C."/>
            <person name="Mungall K."/>
            <person name="Atkin R."/>
            <person name="Bason N."/>
            <person name="Brooks K."/>
            <person name="Chillingworth T."/>
            <person name="Clark K."/>
            <person name="Doggett J."/>
            <person name="Fraser A."/>
            <person name="Hance Z."/>
            <person name="Hauser H."/>
            <person name="Jagels K."/>
            <person name="Moule S."/>
            <person name="Norbertczak H."/>
            <person name="Ormond D."/>
            <person name="Price C."/>
            <person name="Quail M.A."/>
            <person name="Sanders M."/>
            <person name="Walker D."/>
            <person name="Whitehead S."/>
            <person name="Salmond G.P.C."/>
            <person name="Birch P.R.J."/>
            <person name="Parkhill J."/>
            <person name="Toth I.K."/>
        </authorList>
    </citation>
    <scope>NUCLEOTIDE SEQUENCE [LARGE SCALE GENOMIC DNA]</scope>
    <source>
        <strain>SCRI 1043 / ATCC BAA-672</strain>
    </source>
</reference>
<gene>
    <name evidence="1" type="primary">minE</name>
    <name type="ordered locus">ECA2370</name>
</gene>
<organism>
    <name type="scientific">Pectobacterium atrosepticum (strain SCRI 1043 / ATCC BAA-672)</name>
    <name type="common">Erwinia carotovora subsp. atroseptica</name>
    <dbReference type="NCBI Taxonomy" id="218491"/>
    <lineage>
        <taxon>Bacteria</taxon>
        <taxon>Pseudomonadati</taxon>
        <taxon>Pseudomonadota</taxon>
        <taxon>Gammaproteobacteria</taxon>
        <taxon>Enterobacterales</taxon>
        <taxon>Pectobacteriaceae</taxon>
        <taxon>Pectobacterium</taxon>
    </lineage>
</organism>
<keyword id="KW-0131">Cell cycle</keyword>
<keyword id="KW-0132">Cell division</keyword>
<keyword id="KW-1185">Reference proteome</keyword>
<sequence>MALLDFFLSRKKTTANIAKERLQIIVAERRRGDNEPHYLPQLKRDILEVICRYVQIDPEMVTVQLEQKGDDISVLELNVTLPEAEETPK</sequence>
<name>MINE_PECAS</name>
<dbReference type="EMBL" id="BX950851">
    <property type="protein sequence ID" value="CAG75273.1"/>
    <property type="molecule type" value="Genomic_DNA"/>
</dbReference>
<dbReference type="RefSeq" id="WP_011093926.1">
    <property type="nucleotide sequence ID" value="NC_004547.2"/>
</dbReference>
<dbReference type="SMR" id="Q6D4M0"/>
<dbReference type="STRING" id="218491.ECA2370"/>
<dbReference type="GeneID" id="57208913"/>
<dbReference type="KEGG" id="eca:ECA2370"/>
<dbReference type="eggNOG" id="COG0851">
    <property type="taxonomic scope" value="Bacteria"/>
</dbReference>
<dbReference type="HOGENOM" id="CLU_137929_2_2_6"/>
<dbReference type="OrthoDB" id="9802655at2"/>
<dbReference type="Proteomes" id="UP000007966">
    <property type="component" value="Chromosome"/>
</dbReference>
<dbReference type="GO" id="GO:0051301">
    <property type="term" value="P:cell division"/>
    <property type="evidence" value="ECO:0007669"/>
    <property type="project" value="UniProtKB-KW"/>
</dbReference>
<dbReference type="GO" id="GO:0032955">
    <property type="term" value="P:regulation of division septum assembly"/>
    <property type="evidence" value="ECO:0007669"/>
    <property type="project" value="InterPro"/>
</dbReference>
<dbReference type="FunFam" id="3.30.1070.10:FF:000001">
    <property type="entry name" value="Cell division topological specificity factor"/>
    <property type="match status" value="1"/>
</dbReference>
<dbReference type="Gene3D" id="3.30.1070.10">
    <property type="entry name" value="Cell division topological specificity factor MinE"/>
    <property type="match status" value="1"/>
</dbReference>
<dbReference type="HAMAP" id="MF_00262">
    <property type="entry name" value="MinE"/>
    <property type="match status" value="1"/>
</dbReference>
<dbReference type="InterPro" id="IPR005527">
    <property type="entry name" value="MinE"/>
</dbReference>
<dbReference type="InterPro" id="IPR036707">
    <property type="entry name" value="MinE_sf"/>
</dbReference>
<dbReference type="NCBIfam" id="TIGR01215">
    <property type="entry name" value="minE"/>
    <property type="match status" value="1"/>
</dbReference>
<dbReference type="NCBIfam" id="NF001422">
    <property type="entry name" value="PRK00296.1"/>
    <property type="match status" value="1"/>
</dbReference>
<dbReference type="Pfam" id="PF03776">
    <property type="entry name" value="MinE"/>
    <property type="match status" value="1"/>
</dbReference>
<dbReference type="SUPFAM" id="SSF55229">
    <property type="entry name" value="Cell division protein MinE topological specificity domain"/>
    <property type="match status" value="1"/>
</dbReference>
<protein>
    <recommendedName>
        <fullName evidence="1">Cell division topological specificity factor</fullName>
    </recommendedName>
</protein>
<proteinExistence type="inferred from homology"/>
<accession>Q6D4M0</accession>
<comment type="function">
    <text evidence="1">Prevents the cell division inhibition by proteins MinC and MinD at internal division sites while permitting inhibition at polar sites. This ensures cell division at the proper site by restricting the formation of a division septum at the midpoint of the long axis of the cell.</text>
</comment>
<comment type="similarity">
    <text evidence="1">Belongs to the MinE family.</text>
</comment>
<evidence type="ECO:0000255" key="1">
    <source>
        <dbReference type="HAMAP-Rule" id="MF_00262"/>
    </source>
</evidence>